<name>RUVB_ALCBS</name>
<proteinExistence type="inferred from homology"/>
<reference key="1">
    <citation type="journal article" date="2006" name="Nat. Biotechnol.">
        <title>Genome sequence of the ubiquitous hydrocarbon-degrading marine bacterium Alcanivorax borkumensis.</title>
        <authorList>
            <person name="Schneiker S."/>
            <person name="Martins dos Santos V.A.P."/>
            <person name="Bartels D."/>
            <person name="Bekel T."/>
            <person name="Brecht M."/>
            <person name="Buhrmester J."/>
            <person name="Chernikova T.N."/>
            <person name="Denaro R."/>
            <person name="Ferrer M."/>
            <person name="Gertler C."/>
            <person name="Goesmann A."/>
            <person name="Golyshina O.V."/>
            <person name="Kaminski F."/>
            <person name="Khachane A.N."/>
            <person name="Lang S."/>
            <person name="Linke B."/>
            <person name="McHardy A.C."/>
            <person name="Meyer F."/>
            <person name="Nechitaylo T."/>
            <person name="Puehler A."/>
            <person name="Regenhardt D."/>
            <person name="Rupp O."/>
            <person name="Sabirova J.S."/>
            <person name="Selbitschka W."/>
            <person name="Yakimov M.M."/>
            <person name="Timmis K.N."/>
            <person name="Vorhoelter F.-J."/>
            <person name="Weidner S."/>
            <person name="Kaiser O."/>
            <person name="Golyshin P.N."/>
        </authorList>
    </citation>
    <scope>NUCLEOTIDE SEQUENCE [LARGE SCALE GENOMIC DNA]</scope>
    <source>
        <strain>ATCC 700651 / DSM 11573 / NCIMB 13689 / SK2</strain>
    </source>
</reference>
<evidence type="ECO:0000255" key="1">
    <source>
        <dbReference type="HAMAP-Rule" id="MF_00016"/>
    </source>
</evidence>
<gene>
    <name evidence="1" type="primary">ruvB</name>
    <name type="ordered locus">ABO_0753</name>
</gene>
<comment type="function">
    <text evidence="1">The RuvA-RuvB-RuvC complex processes Holliday junction (HJ) DNA during genetic recombination and DNA repair, while the RuvA-RuvB complex plays an important role in the rescue of blocked DNA replication forks via replication fork reversal (RFR). RuvA specifically binds to HJ cruciform DNA, conferring on it an open structure. The RuvB hexamer acts as an ATP-dependent pump, pulling dsDNA into and through the RuvAB complex. RuvB forms 2 homohexamers on either side of HJ DNA bound by 1 or 2 RuvA tetramers; 4 subunits per hexamer contact DNA at a time. Coordinated motions by a converter formed by DNA-disengaged RuvB subunits stimulates ATP hydrolysis and nucleotide exchange. Immobilization of the converter enables RuvB to convert the ATP-contained energy into a lever motion, pulling 2 nucleotides of DNA out of the RuvA tetramer per ATP hydrolyzed, thus driving DNA branch migration. The RuvB motors rotate together with the DNA substrate, which together with the progressing nucleotide cycle form the mechanistic basis for DNA recombination by continuous HJ branch migration. Branch migration allows RuvC to scan DNA until it finds its consensus sequence, where it cleaves and resolves cruciform DNA.</text>
</comment>
<comment type="catalytic activity">
    <reaction evidence="1">
        <text>ATP + H2O = ADP + phosphate + H(+)</text>
        <dbReference type="Rhea" id="RHEA:13065"/>
        <dbReference type="ChEBI" id="CHEBI:15377"/>
        <dbReference type="ChEBI" id="CHEBI:15378"/>
        <dbReference type="ChEBI" id="CHEBI:30616"/>
        <dbReference type="ChEBI" id="CHEBI:43474"/>
        <dbReference type="ChEBI" id="CHEBI:456216"/>
    </reaction>
</comment>
<comment type="subunit">
    <text evidence="1">Homohexamer. Forms an RuvA(8)-RuvB(12)-Holliday junction (HJ) complex. HJ DNA is sandwiched between 2 RuvA tetramers; dsDNA enters through RuvA and exits via RuvB. An RuvB hexamer assembles on each DNA strand where it exits the tetramer. Each RuvB hexamer is contacted by two RuvA subunits (via domain III) on 2 adjacent RuvB subunits; this complex drives branch migration. In the full resolvosome a probable DNA-RuvA(4)-RuvB(12)-RuvC(2) complex forms which resolves the HJ.</text>
</comment>
<comment type="subcellular location">
    <subcellularLocation>
        <location evidence="1">Cytoplasm</location>
    </subcellularLocation>
</comment>
<comment type="domain">
    <text evidence="1">Has 3 domains, the large (RuvB-L) and small ATPase (RuvB-S) domains and the C-terminal head (RuvB-H) domain. The head domain binds DNA, while the ATPase domains jointly bind ATP, ADP or are empty depending on the state of the subunit in the translocation cycle. During a single DNA translocation step the structure of each domain remains the same, but their relative positions change.</text>
</comment>
<comment type="similarity">
    <text evidence="1">Belongs to the RuvB family.</text>
</comment>
<dbReference type="EC" id="3.6.4.-" evidence="1"/>
<dbReference type="EMBL" id="AM286690">
    <property type="protein sequence ID" value="CAL16201.1"/>
    <property type="molecule type" value="Genomic_DNA"/>
</dbReference>
<dbReference type="RefSeq" id="WP_011588037.1">
    <property type="nucleotide sequence ID" value="NC_008260.1"/>
</dbReference>
<dbReference type="SMR" id="Q0VRJ7"/>
<dbReference type="STRING" id="393595.ABO_0753"/>
<dbReference type="KEGG" id="abo:ABO_0753"/>
<dbReference type="eggNOG" id="COG2255">
    <property type="taxonomic scope" value="Bacteria"/>
</dbReference>
<dbReference type="HOGENOM" id="CLU_055599_1_0_6"/>
<dbReference type="OrthoDB" id="9804478at2"/>
<dbReference type="Proteomes" id="UP000008871">
    <property type="component" value="Chromosome"/>
</dbReference>
<dbReference type="GO" id="GO:0005737">
    <property type="term" value="C:cytoplasm"/>
    <property type="evidence" value="ECO:0007669"/>
    <property type="project" value="UniProtKB-SubCell"/>
</dbReference>
<dbReference type="GO" id="GO:0048476">
    <property type="term" value="C:Holliday junction resolvase complex"/>
    <property type="evidence" value="ECO:0007669"/>
    <property type="project" value="UniProtKB-UniRule"/>
</dbReference>
<dbReference type="GO" id="GO:0005524">
    <property type="term" value="F:ATP binding"/>
    <property type="evidence" value="ECO:0007669"/>
    <property type="project" value="UniProtKB-UniRule"/>
</dbReference>
<dbReference type="GO" id="GO:0016887">
    <property type="term" value="F:ATP hydrolysis activity"/>
    <property type="evidence" value="ECO:0007669"/>
    <property type="project" value="InterPro"/>
</dbReference>
<dbReference type="GO" id="GO:0000400">
    <property type="term" value="F:four-way junction DNA binding"/>
    <property type="evidence" value="ECO:0007669"/>
    <property type="project" value="UniProtKB-UniRule"/>
</dbReference>
<dbReference type="GO" id="GO:0009378">
    <property type="term" value="F:four-way junction helicase activity"/>
    <property type="evidence" value="ECO:0007669"/>
    <property type="project" value="InterPro"/>
</dbReference>
<dbReference type="GO" id="GO:0006310">
    <property type="term" value="P:DNA recombination"/>
    <property type="evidence" value="ECO:0007669"/>
    <property type="project" value="UniProtKB-UniRule"/>
</dbReference>
<dbReference type="GO" id="GO:0006281">
    <property type="term" value="P:DNA repair"/>
    <property type="evidence" value="ECO:0007669"/>
    <property type="project" value="UniProtKB-UniRule"/>
</dbReference>
<dbReference type="CDD" id="cd00009">
    <property type="entry name" value="AAA"/>
    <property type="match status" value="1"/>
</dbReference>
<dbReference type="FunFam" id="1.10.8.60:FF:000023">
    <property type="entry name" value="Holliday junction ATP-dependent DNA helicase RuvB"/>
    <property type="match status" value="1"/>
</dbReference>
<dbReference type="FunFam" id="3.40.50.300:FF:000073">
    <property type="entry name" value="Holliday junction ATP-dependent DNA helicase RuvB"/>
    <property type="match status" value="1"/>
</dbReference>
<dbReference type="Gene3D" id="1.10.8.60">
    <property type="match status" value="1"/>
</dbReference>
<dbReference type="Gene3D" id="3.40.50.300">
    <property type="entry name" value="P-loop containing nucleotide triphosphate hydrolases"/>
    <property type="match status" value="1"/>
</dbReference>
<dbReference type="Gene3D" id="1.10.10.10">
    <property type="entry name" value="Winged helix-like DNA-binding domain superfamily/Winged helix DNA-binding domain"/>
    <property type="match status" value="1"/>
</dbReference>
<dbReference type="HAMAP" id="MF_00016">
    <property type="entry name" value="DNA_HJ_migration_RuvB"/>
    <property type="match status" value="1"/>
</dbReference>
<dbReference type="InterPro" id="IPR003593">
    <property type="entry name" value="AAA+_ATPase"/>
</dbReference>
<dbReference type="InterPro" id="IPR041445">
    <property type="entry name" value="AAA_lid_4"/>
</dbReference>
<dbReference type="InterPro" id="IPR004605">
    <property type="entry name" value="DNA_helicase_Holl-junc_RuvB"/>
</dbReference>
<dbReference type="InterPro" id="IPR027417">
    <property type="entry name" value="P-loop_NTPase"/>
</dbReference>
<dbReference type="InterPro" id="IPR008824">
    <property type="entry name" value="RuvB-like_N"/>
</dbReference>
<dbReference type="InterPro" id="IPR008823">
    <property type="entry name" value="RuvB_C"/>
</dbReference>
<dbReference type="InterPro" id="IPR036388">
    <property type="entry name" value="WH-like_DNA-bd_sf"/>
</dbReference>
<dbReference type="InterPro" id="IPR036390">
    <property type="entry name" value="WH_DNA-bd_sf"/>
</dbReference>
<dbReference type="NCBIfam" id="NF000868">
    <property type="entry name" value="PRK00080.1"/>
    <property type="match status" value="1"/>
</dbReference>
<dbReference type="NCBIfam" id="TIGR00635">
    <property type="entry name" value="ruvB"/>
    <property type="match status" value="1"/>
</dbReference>
<dbReference type="PANTHER" id="PTHR42848">
    <property type="match status" value="1"/>
</dbReference>
<dbReference type="PANTHER" id="PTHR42848:SF1">
    <property type="entry name" value="HOLLIDAY JUNCTION BRANCH MIGRATION COMPLEX SUBUNIT RUVB"/>
    <property type="match status" value="1"/>
</dbReference>
<dbReference type="Pfam" id="PF17864">
    <property type="entry name" value="AAA_lid_4"/>
    <property type="match status" value="1"/>
</dbReference>
<dbReference type="Pfam" id="PF05491">
    <property type="entry name" value="RuvB_C"/>
    <property type="match status" value="1"/>
</dbReference>
<dbReference type="Pfam" id="PF05496">
    <property type="entry name" value="RuvB_N"/>
    <property type="match status" value="1"/>
</dbReference>
<dbReference type="SMART" id="SM00382">
    <property type="entry name" value="AAA"/>
    <property type="match status" value="1"/>
</dbReference>
<dbReference type="SUPFAM" id="SSF52540">
    <property type="entry name" value="P-loop containing nucleoside triphosphate hydrolases"/>
    <property type="match status" value="1"/>
</dbReference>
<dbReference type="SUPFAM" id="SSF46785">
    <property type="entry name" value="Winged helix' DNA-binding domain"/>
    <property type="match status" value="1"/>
</dbReference>
<accession>Q0VRJ7</accession>
<sequence>MDNERVITAVAVGSQEEQQDRAIRPASLADYHGQPKVSERMEIFIDAARGRNEALDHTLIFGPPGLGKTTLAHIIAREMGCDLKSTSGPVLEKAGDLAAILTNLEEGDVLFVDEIHRLSPVVEEILYPAMEDYQLDIMIGEGPAARSIKLDLPPFTLVGATTRAGLLTAPLRDRFGIVQRLEFYSVDDLSGIVSRACDILAIPIEAAGAMEVARRARGTPRIANRLLRRVRDYAEVKGDGRITEEIAQRALDMLEVDSCGLDGTDRRLLDMIMHKFDGGPVGLESLAAALNEDSGTLEEVVEPYLIQQGFIQRTPRGRAVTNHAWRHFGLQRPRQDGDLFND</sequence>
<keyword id="KW-0067">ATP-binding</keyword>
<keyword id="KW-0963">Cytoplasm</keyword>
<keyword id="KW-0227">DNA damage</keyword>
<keyword id="KW-0233">DNA recombination</keyword>
<keyword id="KW-0234">DNA repair</keyword>
<keyword id="KW-0238">DNA-binding</keyword>
<keyword id="KW-0378">Hydrolase</keyword>
<keyword id="KW-0547">Nucleotide-binding</keyword>
<keyword id="KW-1185">Reference proteome</keyword>
<protein>
    <recommendedName>
        <fullName evidence="1">Holliday junction branch migration complex subunit RuvB</fullName>
        <ecNumber evidence="1">3.6.4.-</ecNumber>
    </recommendedName>
</protein>
<feature type="chain" id="PRO_0000322778" description="Holliday junction branch migration complex subunit RuvB">
    <location>
        <begin position="1"/>
        <end position="342"/>
    </location>
</feature>
<feature type="region of interest" description="Large ATPase domain (RuvB-L)" evidence="1">
    <location>
        <begin position="1"/>
        <end position="184"/>
    </location>
</feature>
<feature type="region of interest" description="Small ATPAse domain (RuvB-S)" evidence="1">
    <location>
        <begin position="185"/>
        <end position="255"/>
    </location>
</feature>
<feature type="region of interest" description="Head domain (RuvB-H)" evidence="1">
    <location>
        <begin position="258"/>
        <end position="342"/>
    </location>
</feature>
<feature type="binding site" evidence="1">
    <location>
        <position position="23"/>
    </location>
    <ligand>
        <name>ATP</name>
        <dbReference type="ChEBI" id="CHEBI:30616"/>
    </ligand>
</feature>
<feature type="binding site" evidence="1">
    <location>
        <position position="24"/>
    </location>
    <ligand>
        <name>ATP</name>
        <dbReference type="ChEBI" id="CHEBI:30616"/>
    </ligand>
</feature>
<feature type="binding site" evidence="1">
    <location>
        <position position="65"/>
    </location>
    <ligand>
        <name>ATP</name>
        <dbReference type="ChEBI" id="CHEBI:30616"/>
    </ligand>
</feature>
<feature type="binding site" evidence="1">
    <location>
        <position position="68"/>
    </location>
    <ligand>
        <name>ATP</name>
        <dbReference type="ChEBI" id="CHEBI:30616"/>
    </ligand>
</feature>
<feature type="binding site" evidence="1">
    <location>
        <position position="69"/>
    </location>
    <ligand>
        <name>ATP</name>
        <dbReference type="ChEBI" id="CHEBI:30616"/>
    </ligand>
</feature>
<feature type="binding site" evidence="1">
    <location>
        <position position="69"/>
    </location>
    <ligand>
        <name>Mg(2+)</name>
        <dbReference type="ChEBI" id="CHEBI:18420"/>
    </ligand>
</feature>
<feature type="binding site" evidence="1">
    <location>
        <position position="70"/>
    </location>
    <ligand>
        <name>ATP</name>
        <dbReference type="ChEBI" id="CHEBI:30616"/>
    </ligand>
</feature>
<feature type="binding site" evidence="1">
    <location>
        <begin position="131"/>
        <end position="133"/>
    </location>
    <ligand>
        <name>ATP</name>
        <dbReference type="ChEBI" id="CHEBI:30616"/>
    </ligand>
</feature>
<feature type="binding site" evidence="1">
    <location>
        <position position="174"/>
    </location>
    <ligand>
        <name>ATP</name>
        <dbReference type="ChEBI" id="CHEBI:30616"/>
    </ligand>
</feature>
<feature type="binding site" evidence="1">
    <location>
        <position position="184"/>
    </location>
    <ligand>
        <name>ATP</name>
        <dbReference type="ChEBI" id="CHEBI:30616"/>
    </ligand>
</feature>
<feature type="binding site" evidence="1">
    <location>
        <position position="221"/>
    </location>
    <ligand>
        <name>ATP</name>
        <dbReference type="ChEBI" id="CHEBI:30616"/>
    </ligand>
</feature>
<feature type="binding site" evidence="1">
    <location>
        <position position="313"/>
    </location>
    <ligand>
        <name>DNA</name>
        <dbReference type="ChEBI" id="CHEBI:16991"/>
    </ligand>
</feature>
<feature type="binding site" evidence="1">
    <location>
        <position position="318"/>
    </location>
    <ligand>
        <name>DNA</name>
        <dbReference type="ChEBI" id="CHEBI:16991"/>
    </ligand>
</feature>
<organism>
    <name type="scientific">Alcanivorax borkumensis (strain ATCC 700651 / DSM 11573 / NCIMB 13689 / SK2)</name>
    <dbReference type="NCBI Taxonomy" id="393595"/>
    <lineage>
        <taxon>Bacteria</taxon>
        <taxon>Pseudomonadati</taxon>
        <taxon>Pseudomonadota</taxon>
        <taxon>Gammaproteobacteria</taxon>
        <taxon>Oceanospirillales</taxon>
        <taxon>Alcanivoracaceae</taxon>
        <taxon>Alcanivorax</taxon>
    </lineage>
</organism>